<feature type="chain" id="PRO_0000418718" description="NADP-reducing hydrogenase subunit HndD">
    <location>
        <begin position="1"/>
        <end position="585"/>
    </location>
</feature>
<feature type="domain" description="2Fe-2S ferredoxin-type" evidence="1">
    <location>
        <begin position="2"/>
        <end position="85"/>
    </location>
</feature>
<feature type="domain" description="4Fe-4S His(Cys)3-ligated-type" evidence="3">
    <location>
        <begin position="85"/>
        <end position="124"/>
    </location>
</feature>
<feature type="domain" description="4Fe-4S ferredoxin-type 1" evidence="2">
    <location>
        <begin position="144"/>
        <end position="174"/>
    </location>
</feature>
<feature type="domain" description="4Fe-4S ferredoxin-type 2" evidence="2">
    <location>
        <begin position="185"/>
        <end position="216"/>
    </location>
</feature>
<feature type="binding site" evidence="1">
    <location>
        <position position="36"/>
    </location>
    <ligand>
        <name>[2Fe-2S] cluster</name>
        <dbReference type="ChEBI" id="CHEBI:190135"/>
    </ligand>
</feature>
<feature type="binding site" evidence="1">
    <location>
        <position position="52"/>
    </location>
    <ligand>
        <name>[2Fe-2S] cluster</name>
        <dbReference type="ChEBI" id="CHEBI:190135"/>
    </ligand>
</feature>
<feature type="binding site" evidence="1">
    <location>
        <position position="55"/>
    </location>
    <ligand>
        <name>[2Fe-2S] cluster</name>
        <dbReference type="ChEBI" id="CHEBI:190135"/>
    </ligand>
</feature>
<feature type="binding site" evidence="1">
    <location>
        <position position="69"/>
    </location>
    <ligand>
        <name>[2Fe-2S] cluster</name>
        <dbReference type="ChEBI" id="CHEBI:190135"/>
    </ligand>
</feature>
<feature type="binding site" evidence="3">
    <location>
        <position position="101"/>
    </location>
    <ligand>
        <name>[4Fe-4S] cluster</name>
        <dbReference type="ChEBI" id="CHEBI:49883"/>
    </ligand>
</feature>
<feature type="binding site" evidence="3">
    <location>
        <position position="105"/>
    </location>
    <ligand>
        <name>[4Fe-4S] cluster</name>
        <dbReference type="ChEBI" id="CHEBI:49883"/>
    </ligand>
</feature>
<feature type="binding site" evidence="3">
    <location>
        <position position="108"/>
    </location>
    <ligand>
        <name>[4Fe-4S] cluster</name>
        <dbReference type="ChEBI" id="CHEBI:49883"/>
    </ligand>
</feature>
<feature type="binding site" evidence="3">
    <location>
        <position position="114"/>
    </location>
    <ligand>
        <name>[4Fe-4S] cluster</name>
        <dbReference type="ChEBI" id="CHEBI:49883"/>
    </ligand>
</feature>
<dbReference type="EC" id="1.12.1.3" evidence="5"/>
<dbReference type="EMBL" id="U07229">
    <property type="protein sequence ID" value="AAA87057.1"/>
    <property type="molecule type" value="Genomic_DNA"/>
</dbReference>
<dbReference type="PIR" id="D57150">
    <property type="entry name" value="D57150"/>
</dbReference>
<dbReference type="SMR" id="Q46508"/>
<dbReference type="KEGG" id="ag:AAA87057"/>
<dbReference type="GO" id="GO:0051537">
    <property type="term" value="F:2 iron, 2 sulfur cluster binding"/>
    <property type="evidence" value="ECO:0007669"/>
    <property type="project" value="UniProtKB-KW"/>
</dbReference>
<dbReference type="GO" id="GO:0051539">
    <property type="term" value="F:4 iron, 4 sulfur cluster binding"/>
    <property type="evidence" value="ECO:0007669"/>
    <property type="project" value="UniProtKB-KW"/>
</dbReference>
<dbReference type="GO" id="GO:0008901">
    <property type="term" value="F:ferredoxin hydrogenase activity"/>
    <property type="evidence" value="ECO:0007669"/>
    <property type="project" value="InterPro"/>
</dbReference>
<dbReference type="GO" id="GO:0050583">
    <property type="term" value="F:hydrogen dehydrogenase (NADP+) activity"/>
    <property type="evidence" value="ECO:0000314"/>
    <property type="project" value="UniProtKB"/>
</dbReference>
<dbReference type="GO" id="GO:0005506">
    <property type="term" value="F:iron ion binding"/>
    <property type="evidence" value="ECO:0007669"/>
    <property type="project" value="InterPro"/>
</dbReference>
<dbReference type="CDD" id="cd00207">
    <property type="entry name" value="fer2"/>
    <property type="match status" value="1"/>
</dbReference>
<dbReference type="FunFam" id="3.30.70.20:FF:000035">
    <property type="entry name" value="Iron hydrogenase 1"/>
    <property type="match status" value="1"/>
</dbReference>
<dbReference type="FunFam" id="3.10.20.740:FF:000005">
    <property type="entry name" value="NADH:ubiquinone oxidoreductase subunit"/>
    <property type="match status" value="1"/>
</dbReference>
<dbReference type="FunFam" id="4.10.260.20:FF:000001">
    <property type="entry name" value="NADP-reducing hydrogenase subunit HndD"/>
    <property type="match status" value="1"/>
</dbReference>
<dbReference type="Gene3D" id="3.10.20.740">
    <property type="match status" value="1"/>
</dbReference>
<dbReference type="Gene3D" id="3.30.70.20">
    <property type="match status" value="1"/>
</dbReference>
<dbReference type="Gene3D" id="3.40.50.1780">
    <property type="match status" value="1"/>
</dbReference>
<dbReference type="Gene3D" id="3.40.950.10">
    <property type="entry name" value="Fe-only Hydrogenase (Larger Subunit), Chain L, domain 3"/>
    <property type="match status" value="1"/>
</dbReference>
<dbReference type="Gene3D" id="4.10.260.20">
    <property type="entry name" value="Iron hydrogenase, small subunit"/>
    <property type="match status" value="1"/>
</dbReference>
<dbReference type="InterPro" id="IPR036010">
    <property type="entry name" value="2Fe-2S_ferredoxin-like_sf"/>
</dbReference>
<dbReference type="InterPro" id="IPR001041">
    <property type="entry name" value="2Fe-2S_ferredoxin-type"/>
</dbReference>
<dbReference type="InterPro" id="IPR017896">
    <property type="entry name" value="4Fe4S_Fe-S-bd"/>
</dbReference>
<dbReference type="InterPro" id="IPR017900">
    <property type="entry name" value="4Fe4S_Fe_S_CS"/>
</dbReference>
<dbReference type="InterPro" id="IPR050340">
    <property type="entry name" value="Cytosolic_Fe-S_CAF"/>
</dbReference>
<dbReference type="InterPro" id="IPR009016">
    <property type="entry name" value="Fe_hydrogenase"/>
</dbReference>
<dbReference type="InterPro" id="IPR004108">
    <property type="entry name" value="Fe_hydrogenase_lsu_C"/>
</dbReference>
<dbReference type="InterPro" id="IPR003149">
    <property type="entry name" value="Fe_hydrogenase_ssu"/>
</dbReference>
<dbReference type="InterPro" id="IPR036991">
    <property type="entry name" value="Fe_hydrogenase_ssu_sf"/>
</dbReference>
<dbReference type="InterPro" id="IPR013352">
    <property type="entry name" value="Fe_hydrogenase_subset"/>
</dbReference>
<dbReference type="InterPro" id="IPR049830">
    <property type="entry name" value="HndD"/>
</dbReference>
<dbReference type="InterPro" id="IPR019574">
    <property type="entry name" value="NADH_UbQ_OxRdtase_Gsu_4Fe4S-bd"/>
</dbReference>
<dbReference type="NCBIfam" id="TIGR02512">
    <property type="entry name" value="FeFe_hydrog_A"/>
    <property type="match status" value="1"/>
</dbReference>
<dbReference type="NCBIfam" id="NF040763">
    <property type="entry name" value="FeFe_hydrog_A6"/>
    <property type="match status" value="1"/>
</dbReference>
<dbReference type="PANTHER" id="PTHR11615">
    <property type="entry name" value="NITRATE, FORMATE, IRON DEHYDROGENASE"/>
    <property type="match status" value="1"/>
</dbReference>
<dbReference type="Pfam" id="PF02906">
    <property type="entry name" value="Fe_hyd_lg_C"/>
    <property type="match status" value="1"/>
</dbReference>
<dbReference type="Pfam" id="PF02256">
    <property type="entry name" value="Fe_hyd_SSU"/>
    <property type="match status" value="1"/>
</dbReference>
<dbReference type="Pfam" id="PF13510">
    <property type="entry name" value="Fer2_4"/>
    <property type="match status" value="1"/>
</dbReference>
<dbReference type="Pfam" id="PF00037">
    <property type="entry name" value="Fer4"/>
    <property type="match status" value="1"/>
</dbReference>
<dbReference type="Pfam" id="PF10588">
    <property type="entry name" value="NADH-G_4Fe-4S_3"/>
    <property type="match status" value="1"/>
</dbReference>
<dbReference type="SMART" id="SM00902">
    <property type="entry name" value="Fe_hyd_SSU"/>
    <property type="match status" value="1"/>
</dbReference>
<dbReference type="SMART" id="SM00929">
    <property type="entry name" value="NADH-G_4Fe-4S_3"/>
    <property type="match status" value="1"/>
</dbReference>
<dbReference type="SUPFAM" id="SSF54292">
    <property type="entry name" value="2Fe-2S ferredoxin-like"/>
    <property type="match status" value="1"/>
</dbReference>
<dbReference type="SUPFAM" id="SSF54862">
    <property type="entry name" value="4Fe-4S ferredoxins"/>
    <property type="match status" value="1"/>
</dbReference>
<dbReference type="SUPFAM" id="SSF53920">
    <property type="entry name" value="Fe-only hydrogenase"/>
    <property type="match status" value="1"/>
</dbReference>
<dbReference type="PROSITE" id="PS51085">
    <property type="entry name" value="2FE2S_FER_2"/>
    <property type="match status" value="1"/>
</dbReference>
<dbReference type="PROSITE" id="PS00198">
    <property type="entry name" value="4FE4S_FER_1"/>
    <property type="match status" value="1"/>
</dbReference>
<dbReference type="PROSITE" id="PS51379">
    <property type="entry name" value="4FE4S_FER_2"/>
    <property type="match status" value="2"/>
</dbReference>
<dbReference type="PROSITE" id="PS51839">
    <property type="entry name" value="4FE4S_HC3"/>
    <property type="match status" value="1"/>
</dbReference>
<proteinExistence type="evidence at protein level"/>
<sequence>MSMLTITIDGKTTSVPEGSTILDAAKTLDIDIPTLCYLNLEALSINNKAASCRVCVVEVEGRRNLAPSCATPVTDNMVVKTNSLRVLNARRTVLELLLSDHPKDCLVCAKSGECELQTLAERFGIRESPYDGGEMSHYRKDISASIIRDMDKCIMCRRCETMCNTVQTCGVLSGVNRGFTAVVAPAFEMNLADTVCTNCGQCVAVCPTGALVEHEYIWEVVEALANPDKVVIVQTAPAVRAALGEDLGVAPGTSVTGKMAAALRRLGFDHVFDTDFAADLTIMEEGSEFLDRLGKHLAGDTNVKLPILTSCCPGWVKFFEHQFPDMLDVPSTAKSPQQMFGAIAKTYYADLLGIPREKLVVVSVMPCLAKKYECARPEFSVNGNPDVDIVITTRELAKLVKRMNIDFAGLPDEDFDAPLGASTGAAPIFGVTGGVIEAALRTAYELATGETLKKVDFEDVRGMDGVKKAKVKVGDNELVIGVAHGLGNARELLKPCGAGETFHAIEVMACPGGCIGGGGQPYHHGDVELLKKRTQVLYAEDAGKPLRKSHENPYIIELYEKFLGKPLSERSHQLLHTHYFKRQRL</sequence>
<name>HNDD_SOLFR</name>
<keyword id="KW-0001">2Fe-2S</keyword>
<keyword id="KW-0004">4Fe-4S</keyword>
<keyword id="KW-0408">Iron</keyword>
<keyword id="KW-0411">Iron-sulfur</keyword>
<keyword id="KW-0479">Metal-binding</keyword>
<keyword id="KW-0521">NADP</keyword>
<keyword id="KW-0560">Oxidoreductase</keyword>
<keyword id="KW-0677">Repeat</keyword>
<accession>Q46508</accession>
<gene>
    <name type="primary">hndD</name>
</gene>
<reference key="1">
    <citation type="journal article" date="1995" name="J. Bacteriol.">
        <title>Characterization of an operon encoding an NADP-reducing hydrogenase in Desulfovibrio fructosovorans.</title>
        <authorList>
            <person name="Malki S."/>
            <person name="Saimmaime I."/>
            <person name="De Luca G."/>
            <person name="Rousset M."/>
            <person name="Dermoun Z."/>
            <person name="Belaich J.P."/>
        </authorList>
    </citation>
    <scope>NUCLEOTIDE SEQUENCE [GENOMIC DNA]</scope>
    <scope>FUNCTION AS A NADP-REDUCING HYDROGENASE</scope>
</reference>
<reference key="2">
    <citation type="journal article" date="1998" name="Biochem. Biophys. Res. Commun.">
        <title>The NADP-reducing hydrogenase of Desulfovibrio fructosovorans: evidence for a native complex with hydrogen-dependent methyl-viologen-reducing activity.</title>
        <authorList>
            <person name="de Luca G."/>
            <person name="de Philip P."/>
            <person name="Rousset M."/>
            <person name="Belaich J.P."/>
            <person name="Dermoun Z."/>
        </authorList>
    </citation>
    <scope>FUNCTION AS A NADP-REDUCING HYDROGENASE</scope>
    <scope>CATALYTIC ACTIVITY</scope>
    <scope>BIOPHYSICOCHEMICAL PROPERTIES</scope>
    <scope>ACTIVITY REGULATION</scope>
    <scope>SUBUNIT</scope>
</reference>
<comment type="function">
    <text evidence="4 5">Catalyzes the reduction of NADP in the presence of molecular H(2) to yield NADPH.</text>
</comment>
<comment type="catalytic activity">
    <reaction evidence="5">
        <text>H2 + NADP(+) = NADPH + H(+)</text>
        <dbReference type="Rhea" id="RHEA:18637"/>
        <dbReference type="ChEBI" id="CHEBI:15378"/>
        <dbReference type="ChEBI" id="CHEBI:18276"/>
        <dbReference type="ChEBI" id="CHEBI:57783"/>
        <dbReference type="ChEBI" id="CHEBI:58349"/>
        <dbReference type="EC" id="1.12.1.3"/>
    </reaction>
</comment>
<comment type="cofactor">
    <cofactor evidence="3">
        <name>[4Fe-4S] cluster</name>
        <dbReference type="ChEBI" id="CHEBI:49883"/>
    </cofactor>
</comment>
<comment type="activity regulation">
    <text evidence="5">Inhibited by oxygen.</text>
</comment>
<comment type="biophysicochemical properties">
    <kinetics>
        <KM evidence="5">0.09 mM for NADP (at 30 degrees Celsius and at pH 8)</KM>
        <Vmax evidence="5">0.013 umol/min/mg enzyme (at 30 degrees Celsius and at pH 8)</Vmax>
    </kinetics>
    <phDependence>
        <text evidence="5">Optimum pH is 8.</text>
    </phDependence>
</comment>
<comment type="subunit">
    <text evidence="5">Heterotetramer composed of HndA, HndB, HndC and HndD subunits. HndD is probably the hydrogenase subunit.</text>
</comment>
<organism>
    <name type="scientific">Solidesulfovibrio fructosivorans</name>
    <name type="common">Desulfovibrio fructosivorans</name>
    <dbReference type="NCBI Taxonomy" id="878"/>
    <lineage>
        <taxon>Bacteria</taxon>
        <taxon>Pseudomonadati</taxon>
        <taxon>Thermodesulfobacteriota</taxon>
        <taxon>Desulfovibrionia</taxon>
        <taxon>Desulfovibrionales</taxon>
        <taxon>Desulfovibrionaceae</taxon>
        <taxon>Solidesulfovibrio</taxon>
    </lineage>
</organism>
<protein>
    <recommendedName>
        <fullName>NADP-reducing hydrogenase subunit HndD</fullName>
        <ecNumber evidence="5">1.12.1.3</ecNumber>
    </recommendedName>
    <alternativeName>
        <fullName>Hydrogen dehydrogenase (NADP(+))</fullName>
    </alternativeName>
</protein>
<evidence type="ECO:0000255" key="1">
    <source>
        <dbReference type="PROSITE-ProRule" id="PRU00465"/>
    </source>
</evidence>
<evidence type="ECO:0000255" key="2">
    <source>
        <dbReference type="PROSITE-ProRule" id="PRU00711"/>
    </source>
</evidence>
<evidence type="ECO:0000255" key="3">
    <source>
        <dbReference type="PROSITE-ProRule" id="PRU01184"/>
    </source>
</evidence>
<evidence type="ECO:0000269" key="4">
    <source>
    </source>
</evidence>
<evidence type="ECO:0000269" key="5">
    <source>
    </source>
</evidence>